<gene>
    <name evidence="1" type="primary">panB</name>
    <name type="ordered locus">Sfri_3280</name>
</gene>
<reference key="1">
    <citation type="submission" date="2006-08" db="EMBL/GenBank/DDBJ databases">
        <title>Complete sequence of Shewanella frigidimarina NCIMB 400.</title>
        <authorList>
            <consortium name="US DOE Joint Genome Institute"/>
            <person name="Copeland A."/>
            <person name="Lucas S."/>
            <person name="Lapidus A."/>
            <person name="Barry K."/>
            <person name="Detter J.C."/>
            <person name="Glavina del Rio T."/>
            <person name="Hammon N."/>
            <person name="Israni S."/>
            <person name="Dalin E."/>
            <person name="Tice H."/>
            <person name="Pitluck S."/>
            <person name="Fredrickson J.K."/>
            <person name="Kolker E."/>
            <person name="McCuel L.A."/>
            <person name="DiChristina T."/>
            <person name="Nealson K.H."/>
            <person name="Newman D."/>
            <person name="Tiedje J.M."/>
            <person name="Zhou J."/>
            <person name="Romine M.F."/>
            <person name="Culley D.E."/>
            <person name="Serres M."/>
            <person name="Chertkov O."/>
            <person name="Brettin T."/>
            <person name="Bruce D."/>
            <person name="Han C."/>
            <person name="Tapia R."/>
            <person name="Gilna P."/>
            <person name="Schmutz J."/>
            <person name="Larimer F."/>
            <person name="Land M."/>
            <person name="Hauser L."/>
            <person name="Kyrpides N."/>
            <person name="Mikhailova N."/>
            <person name="Richardson P."/>
        </authorList>
    </citation>
    <scope>NUCLEOTIDE SEQUENCE [LARGE SCALE GENOMIC DNA]</scope>
    <source>
        <strain>NCIMB 400</strain>
    </source>
</reference>
<organism>
    <name type="scientific">Shewanella frigidimarina (strain NCIMB 400)</name>
    <dbReference type="NCBI Taxonomy" id="318167"/>
    <lineage>
        <taxon>Bacteria</taxon>
        <taxon>Pseudomonadati</taxon>
        <taxon>Pseudomonadota</taxon>
        <taxon>Gammaproteobacteria</taxon>
        <taxon>Alteromonadales</taxon>
        <taxon>Shewanellaceae</taxon>
        <taxon>Shewanella</taxon>
    </lineage>
</organism>
<keyword id="KW-0963">Cytoplasm</keyword>
<keyword id="KW-0460">Magnesium</keyword>
<keyword id="KW-0479">Metal-binding</keyword>
<keyword id="KW-0566">Pantothenate biosynthesis</keyword>
<keyword id="KW-1185">Reference proteome</keyword>
<keyword id="KW-0808">Transferase</keyword>
<dbReference type="EC" id="2.1.2.11" evidence="1"/>
<dbReference type="EMBL" id="CP000447">
    <property type="protein sequence ID" value="ABI73116.1"/>
    <property type="molecule type" value="Genomic_DNA"/>
</dbReference>
<dbReference type="RefSeq" id="WP_011638719.1">
    <property type="nucleotide sequence ID" value="NC_008345.1"/>
</dbReference>
<dbReference type="SMR" id="Q07XZ8"/>
<dbReference type="STRING" id="318167.Sfri_3280"/>
<dbReference type="KEGG" id="sfr:Sfri_3280"/>
<dbReference type="eggNOG" id="COG0413">
    <property type="taxonomic scope" value="Bacteria"/>
</dbReference>
<dbReference type="HOGENOM" id="CLU_036645_1_0_6"/>
<dbReference type="OrthoDB" id="9781789at2"/>
<dbReference type="UniPathway" id="UPA00028">
    <property type="reaction ID" value="UER00003"/>
</dbReference>
<dbReference type="Proteomes" id="UP000000684">
    <property type="component" value="Chromosome"/>
</dbReference>
<dbReference type="GO" id="GO:0005737">
    <property type="term" value="C:cytoplasm"/>
    <property type="evidence" value="ECO:0007669"/>
    <property type="project" value="UniProtKB-SubCell"/>
</dbReference>
<dbReference type="GO" id="GO:0003864">
    <property type="term" value="F:3-methyl-2-oxobutanoate hydroxymethyltransferase activity"/>
    <property type="evidence" value="ECO:0007669"/>
    <property type="project" value="UniProtKB-UniRule"/>
</dbReference>
<dbReference type="GO" id="GO:0000287">
    <property type="term" value="F:magnesium ion binding"/>
    <property type="evidence" value="ECO:0007669"/>
    <property type="project" value="TreeGrafter"/>
</dbReference>
<dbReference type="GO" id="GO:0015940">
    <property type="term" value="P:pantothenate biosynthetic process"/>
    <property type="evidence" value="ECO:0007669"/>
    <property type="project" value="UniProtKB-UniRule"/>
</dbReference>
<dbReference type="CDD" id="cd06557">
    <property type="entry name" value="KPHMT-like"/>
    <property type="match status" value="1"/>
</dbReference>
<dbReference type="FunFam" id="3.20.20.60:FF:000003">
    <property type="entry name" value="3-methyl-2-oxobutanoate hydroxymethyltransferase"/>
    <property type="match status" value="1"/>
</dbReference>
<dbReference type="Gene3D" id="3.20.20.60">
    <property type="entry name" value="Phosphoenolpyruvate-binding domains"/>
    <property type="match status" value="1"/>
</dbReference>
<dbReference type="HAMAP" id="MF_00156">
    <property type="entry name" value="PanB"/>
    <property type="match status" value="1"/>
</dbReference>
<dbReference type="InterPro" id="IPR003700">
    <property type="entry name" value="Pantoate_hydroxy_MeTrfase"/>
</dbReference>
<dbReference type="InterPro" id="IPR015813">
    <property type="entry name" value="Pyrv/PenolPyrv_kinase-like_dom"/>
</dbReference>
<dbReference type="InterPro" id="IPR040442">
    <property type="entry name" value="Pyrv_kinase-like_dom_sf"/>
</dbReference>
<dbReference type="NCBIfam" id="TIGR00222">
    <property type="entry name" value="panB"/>
    <property type="match status" value="1"/>
</dbReference>
<dbReference type="NCBIfam" id="NF001452">
    <property type="entry name" value="PRK00311.1"/>
    <property type="match status" value="1"/>
</dbReference>
<dbReference type="PANTHER" id="PTHR20881">
    <property type="entry name" value="3-METHYL-2-OXOBUTANOATE HYDROXYMETHYLTRANSFERASE"/>
    <property type="match status" value="1"/>
</dbReference>
<dbReference type="PANTHER" id="PTHR20881:SF0">
    <property type="entry name" value="3-METHYL-2-OXOBUTANOATE HYDROXYMETHYLTRANSFERASE"/>
    <property type="match status" value="1"/>
</dbReference>
<dbReference type="Pfam" id="PF02548">
    <property type="entry name" value="Pantoate_transf"/>
    <property type="match status" value="1"/>
</dbReference>
<dbReference type="PIRSF" id="PIRSF000388">
    <property type="entry name" value="Pantoate_hydroxy_MeTrfase"/>
    <property type="match status" value="1"/>
</dbReference>
<dbReference type="SUPFAM" id="SSF51621">
    <property type="entry name" value="Phosphoenolpyruvate/pyruvate domain"/>
    <property type="match status" value="1"/>
</dbReference>
<name>PANB_SHEFN</name>
<evidence type="ECO:0000255" key="1">
    <source>
        <dbReference type="HAMAP-Rule" id="MF_00156"/>
    </source>
</evidence>
<feature type="chain" id="PRO_0000297369" description="3-methyl-2-oxobutanoate hydroxymethyltransferase">
    <location>
        <begin position="1"/>
        <end position="264"/>
    </location>
</feature>
<feature type="active site" description="Proton acceptor" evidence="1">
    <location>
        <position position="181"/>
    </location>
</feature>
<feature type="binding site" evidence="1">
    <location>
        <begin position="45"/>
        <end position="46"/>
    </location>
    <ligand>
        <name>3-methyl-2-oxobutanoate</name>
        <dbReference type="ChEBI" id="CHEBI:11851"/>
    </ligand>
</feature>
<feature type="binding site" evidence="1">
    <location>
        <position position="45"/>
    </location>
    <ligand>
        <name>Mg(2+)</name>
        <dbReference type="ChEBI" id="CHEBI:18420"/>
    </ligand>
</feature>
<feature type="binding site" evidence="1">
    <location>
        <position position="84"/>
    </location>
    <ligand>
        <name>3-methyl-2-oxobutanoate</name>
        <dbReference type="ChEBI" id="CHEBI:11851"/>
    </ligand>
</feature>
<feature type="binding site" evidence="1">
    <location>
        <position position="84"/>
    </location>
    <ligand>
        <name>Mg(2+)</name>
        <dbReference type="ChEBI" id="CHEBI:18420"/>
    </ligand>
</feature>
<feature type="binding site" evidence="1">
    <location>
        <position position="112"/>
    </location>
    <ligand>
        <name>3-methyl-2-oxobutanoate</name>
        <dbReference type="ChEBI" id="CHEBI:11851"/>
    </ligand>
</feature>
<feature type="binding site" evidence="1">
    <location>
        <position position="114"/>
    </location>
    <ligand>
        <name>Mg(2+)</name>
        <dbReference type="ChEBI" id="CHEBI:18420"/>
    </ligand>
</feature>
<comment type="function">
    <text evidence="1">Catalyzes the reversible reaction in which hydroxymethyl group from 5,10-methylenetetrahydrofolate is transferred onto alpha-ketoisovalerate to form ketopantoate.</text>
</comment>
<comment type="catalytic activity">
    <reaction evidence="1">
        <text>3-methyl-2-oxobutanoate + (6R)-5,10-methylene-5,6,7,8-tetrahydrofolate + H2O = 2-dehydropantoate + (6S)-5,6,7,8-tetrahydrofolate</text>
        <dbReference type="Rhea" id="RHEA:11824"/>
        <dbReference type="ChEBI" id="CHEBI:11561"/>
        <dbReference type="ChEBI" id="CHEBI:11851"/>
        <dbReference type="ChEBI" id="CHEBI:15377"/>
        <dbReference type="ChEBI" id="CHEBI:15636"/>
        <dbReference type="ChEBI" id="CHEBI:57453"/>
        <dbReference type="EC" id="2.1.2.11"/>
    </reaction>
</comment>
<comment type="cofactor">
    <cofactor evidence="1">
        <name>Mg(2+)</name>
        <dbReference type="ChEBI" id="CHEBI:18420"/>
    </cofactor>
    <text evidence="1">Binds 1 Mg(2+) ion per subunit.</text>
</comment>
<comment type="pathway">
    <text evidence="1">Cofactor biosynthesis; (R)-pantothenate biosynthesis; (R)-pantoate from 3-methyl-2-oxobutanoate: step 1/2.</text>
</comment>
<comment type="subunit">
    <text evidence="1">Homodecamer; pentamer of dimers.</text>
</comment>
<comment type="subcellular location">
    <subcellularLocation>
        <location evidence="1">Cytoplasm</location>
    </subcellularLocation>
</comment>
<comment type="similarity">
    <text evidence="1">Belongs to the PanB family.</text>
</comment>
<accession>Q07XZ8</accession>
<proteinExistence type="inferred from homology"/>
<protein>
    <recommendedName>
        <fullName evidence="1">3-methyl-2-oxobutanoate hydroxymethyltransferase</fullName>
        <ecNumber evidence="1">2.1.2.11</ecNumber>
    </recommendedName>
    <alternativeName>
        <fullName evidence="1">Ketopantoate hydroxymethyltransferase</fullName>
        <shortName evidence="1">KPHMT</shortName>
    </alternativeName>
</protein>
<sequence>MSKVTSSTLIKFKQEGKKFTALTAYDASFAGAFDSEGVDVLLVGDSLGMVLQGHNDTLPVTIADIAYHTACVKRGVARALLIADMPFMSYSTPEQTMNNAAILMQAGASMVKLEGGHWLLESVKMLTERGIPVCAHLGLTPQSVNVFGGFKVQGRDADNAQRILDEAKALQAAGAQLLVVECIPAPLAKAITEALTIPVIGIGAGADTDGQILVMHDVLGISSGYIPRFSKNYLKQTGEIRSAIRAYIDEVANGTFPAEEHTFN</sequence>